<dbReference type="EMBL" id="X96869">
    <property type="protein sequence ID" value="CAA65612.1"/>
    <property type="status" value="ALT_FRAME"/>
    <property type="molecule type" value="Genomic_DNA"/>
</dbReference>
<dbReference type="EMBL" id="AAFI02000012">
    <property type="protein sequence ID" value="EAL69943.1"/>
    <property type="molecule type" value="Genomic_DNA"/>
</dbReference>
<dbReference type="PIR" id="S71628">
    <property type="entry name" value="S71628"/>
</dbReference>
<dbReference type="RefSeq" id="XP_644179.1">
    <property type="nucleotide sequence ID" value="XM_639087.1"/>
</dbReference>
<dbReference type="SMR" id="Q869S5"/>
<dbReference type="FunCoup" id="Q869S5">
    <property type="interactions" value="744"/>
</dbReference>
<dbReference type="STRING" id="44689.Q869S5"/>
<dbReference type="GlyGen" id="Q869S5">
    <property type="glycosylation" value="1 site"/>
</dbReference>
<dbReference type="PaxDb" id="44689-DDB0185194"/>
<dbReference type="EnsemblProtists" id="EAL69943">
    <property type="protein sequence ID" value="EAL69943"/>
    <property type="gene ID" value="DDB_G0274101"/>
</dbReference>
<dbReference type="GeneID" id="8619608"/>
<dbReference type="KEGG" id="ddi:DDB_G0274101"/>
<dbReference type="dictyBase" id="DDB_G0274101">
    <property type="gene designation" value="dokA"/>
</dbReference>
<dbReference type="VEuPathDB" id="AmoebaDB:DDB_G0274101"/>
<dbReference type="eggNOG" id="KOG0519">
    <property type="taxonomic scope" value="Eukaryota"/>
</dbReference>
<dbReference type="HOGENOM" id="CLU_241803_0_0_1"/>
<dbReference type="InParanoid" id="Q869S5"/>
<dbReference type="OMA" id="MIDGSTE"/>
<dbReference type="PRO" id="PR:Q869S5"/>
<dbReference type="Proteomes" id="UP000002195">
    <property type="component" value="Chromosome 2"/>
</dbReference>
<dbReference type="GO" id="GO:0009927">
    <property type="term" value="F:histidine phosphotransfer kinase activity"/>
    <property type="evidence" value="ECO:0000250"/>
    <property type="project" value="dictyBase"/>
</dbReference>
<dbReference type="GO" id="GO:0000156">
    <property type="term" value="F:phosphorelay response regulator activity"/>
    <property type="evidence" value="ECO:0000314"/>
    <property type="project" value="dictyBase"/>
</dbReference>
<dbReference type="GO" id="GO:0000155">
    <property type="term" value="F:phosphorelay sensor kinase activity"/>
    <property type="evidence" value="ECO:0000250"/>
    <property type="project" value="dictyBase"/>
</dbReference>
<dbReference type="GO" id="GO:0048870">
    <property type="term" value="P:cell motility"/>
    <property type="evidence" value="ECO:0000316"/>
    <property type="project" value="dictyBase"/>
</dbReference>
<dbReference type="GO" id="GO:0007234">
    <property type="term" value="P:osmosensory signaling via phosphorelay pathway"/>
    <property type="evidence" value="ECO:0000315"/>
    <property type="project" value="dictyBase"/>
</dbReference>
<dbReference type="GO" id="GO:0000160">
    <property type="term" value="P:phosphorelay signal transduction system"/>
    <property type="evidence" value="ECO:0000250"/>
    <property type="project" value="dictyBase"/>
</dbReference>
<dbReference type="GO" id="GO:0030435">
    <property type="term" value="P:sporulation resulting in formation of a cellular spore"/>
    <property type="evidence" value="ECO:0000315"/>
    <property type="project" value="dictyBase"/>
</dbReference>
<dbReference type="CDD" id="cd16922">
    <property type="entry name" value="HATPase_EvgS-ArcB-TorS-like"/>
    <property type="match status" value="1"/>
</dbReference>
<dbReference type="CDD" id="cd00082">
    <property type="entry name" value="HisKA"/>
    <property type="match status" value="1"/>
</dbReference>
<dbReference type="CDD" id="cd00130">
    <property type="entry name" value="PAS"/>
    <property type="match status" value="2"/>
</dbReference>
<dbReference type="CDD" id="cd17546">
    <property type="entry name" value="REC_hyHK_CKI1_RcsC-like"/>
    <property type="match status" value="1"/>
</dbReference>
<dbReference type="FunFam" id="3.40.50.2300:FF:000383">
    <property type="entry name" value="Sensor histidine kinase"/>
    <property type="match status" value="1"/>
</dbReference>
<dbReference type="FunFam" id="3.30.565.10:FF:000010">
    <property type="entry name" value="Sensor histidine kinase RcsC"/>
    <property type="match status" value="1"/>
</dbReference>
<dbReference type="Gene3D" id="1.10.287.130">
    <property type="match status" value="1"/>
</dbReference>
<dbReference type="Gene3D" id="3.40.50.2300">
    <property type="match status" value="1"/>
</dbReference>
<dbReference type="Gene3D" id="3.30.565.10">
    <property type="entry name" value="Histidine kinase-like ATPase, C-terminal domain"/>
    <property type="match status" value="1"/>
</dbReference>
<dbReference type="Gene3D" id="3.30.450.20">
    <property type="entry name" value="PAS domain"/>
    <property type="match status" value="1"/>
</dbReference>
<dbReference type="InterPro" id="IPR011006">
    <property type="entry name" value="CheY-like_superfamily"/>
</dbReference>
<dbReference type="InterPro" id="IPR036890">
    <property type="entry name" value="HATPase_C_sf"/>
</dbReference>
<dbReference type="InterPro" id="IPR005467">
    <property type="entry name" value="His_kinase_dom"/>
</dbReference>
<dbReference type="InterPro" id="IPR003661">
    <property type="entry name" value="HisK_dim/P_dom"/>
</dbReference>
<dbReference type="InterPro" id="IPR036097">
    <property type="entry name" value="HisK_dim/P_sf"/>
</dbReference>
<dbReference type="InterPro" id="IPR000014">
    <property type="entry name" value="PAS"/>
</dbReference>
<dbReference type="InterPro" id="IPR035965">
    <property type="entry name" value="PAS-like_dom_sf"/>
</dbReference>
<dbReference type="InterPro" id="IPR004358">
    <property type="entry name" value="Sig_transdc_His_kin-like_C"/>
</dbReference>
<dbReference type="InterPro" id="IPR001789">
    <property type="entry name" value="Sig_transdc_resp-reg_receiver"/>
</dbReference>
<dbReference type="NCBIfam" id="TIGR00229">
    <property type="entry name" value="sensory_box"/>
    <property type="match status" value="1"/>
</dbReference>
<dbReference type="PANTHER" id="PTHR45339:SF5">
    <property type="entry name" value="HISTIDINE KINASE"/>
    <property type="match status" value="1"/>
</dbReference>
<dbReference type="PANTHER" id="PTHR45339">
    <property type="entry name" value="HYBRID SIGNAL TRANSDUCTION HISTIDINE KINASE J"/>
    <property type="match status" value="1"/>
</dbReference>
<dbReference type="Pfam" id="PF02518">
    <property type="entry name" value="HATPase_c"/>
    <property type="match status" value="1"/>
</dbReference>
<dbReference type="Pfam" id="PF00512">
    <property type="entry name" value="HisKA"/>
    <property type="match status" value="1"/>
</dbReference>
<dbReference type="Pfam" id="PF13426">
    <property type="entry name" value="PAS_9"/>
    <property type="match status" value="1"/>
</dbReference>
<dbReference type="Pfam" id="PF00072">
    <property type="entry name" value="Response_reg"/>
    <property type="match status" value="1"/>
</dbReference>
<dbReference type="PRINTS" id="PR00344">
    <property type="entry name" value="BCTRLSENSOR"/>
</dbReference>
<dbReference type="SMART" id="SM00387">
    <property type="entry name" value="HATPase_c"/>
    <property type="match status" value="1"/>
</dbReference>
<dbReference type="SMART" id="SM00388">
    <property type="entry name" value="HisKA"/>
    <property type="match status" value="1"/>
</dbReference>
<dbReference type="SMART" id="SM00091">
    <property type="entry name" value="PAS"/>
    <property type="match status" value="2"/>
</dbReference>
<dbReference type="SMART" id="SM00448">
    <property type="entry name" value="REC"/>
    <property type="match status" value="1"/>
</dbReference>
<dbReference type="SUPFAM" id="SSF55874">
    <property type="entry name" value="ATPase domain of HSP90 chaperone/DNA topoisomerase II/histidine kinase"/>
    <property type="match status" value="1"/>
</dbReference>
<dbReference type="SUPFAM" id="SSF52172">
    <property type="entry name" value="CheY-like"/>
    <property type="match status" value="2"/>
</dbReference>
<dbReference type="SUPFAM" id="SSF47384">
    <property type="entry name" value="Homodimeric domain of signal transducing histidine kinase"/>
    <property type="match status" value="1"/>
</dbReference>
<dbReference type="SUPFAM" id="SSF55785">
    <property type="entry name" value="PYP-like sensor domain (PAS domain)"/>
    <property type="match status" value="2"/>
</dbReference>
<dbReference type="PROSITE" id="PS00086">
    <property type="entry name" value="CYTOCHROME_P450"/>
    <property type="match status" value="1"/>
</dbReference>
<dbReference type="PROSITE" id="PS50109">
    <property type="entry name" value="HIS_KIN"/>
    <property type="match status" value="1"/>
</dbReference>
<dbReference type="PROSITE" id="PS50110">
    <property type="entry name" value="RESPONSE_REGULATORY"/>
    <property type="match status" value="1"/>
</dbReference>
<organism>
    <name type="scientific">Dictyostelium discoideum</name>
    <name type="common">Social amoeba</name>
    <dbReference type="NCBI Taxonomy" id="44689"/>
    <lineage>
        <taxon>Eukaryota</taxon>
        <taxon>Amoebozoa</taxon>
        <taxon>Evosea</taxon>
        <taxon>Eumycetozoa</taxon>
        <taxon>Dictyostelia</taxon>
        <taxon>Dictyosteliales</taxon>
        <taxon>Dictyosteliaceae</taxon>
        <taxon>Dictyostelium</taxon>
    </lineage>
</organism>
<accession>Q869S5</accession>
<accession>Q23901</accession>
<accession>Q554Z4</accession>
<proteinExistence type="evidence at protein level"/>
<protein>
    <recommendedName>
        <fullName>Hybrid signal transduction protein dokA</fullName>
    </recommendedName>
</protein>
<comment type="function">
    <text evidence="4 5">Part of the osmoregulatory pathway which leads to the increase of intracellular cAMP concentration in response to hyperosmotic stress. Thought to negatively regulate the rdeA-regA pathway by acting as a phosphatase towards the HPt protein rdeA. Has probably no histidine kinase activity.</text>
</comment>
<comment type="developmental stage">
    <text evidence="6">Expression increases during the late culmination stage.</text>
</comment>
<comment type="PTM">
    <text evidence="5">Under osmotic stress conditions, this protein undergoes phosphorylation at a serine residue in the kinase core, which is not due to an autophosphorylation of dokA. This is in contrast to the classic two-component paradigm, which predicts only histidine and aspartate phosphorylation.</text>
</comment>
<comment type="disruption phenotype">
    <text evidence="4">Elevated levels of cAMP.</text>
</comment>
<comment type="sequence caution" evidence="7">
    <conflict type="frameshift">
        <sequence resource="EMBL-CDS" id="CAA65612"/>
    </conflict>
</comment>
<evidence type="ECO:0000255" key="1">
    <source>
        <dbReference type="PROSITE-ProRule" id="PRU00107"/>
    </source>
</evidence>
<evidence type="ECO:0000255" key="2">
    <source>
        <dbReference type="PROSITE-ProRule" id="PRU00169"/>
    </source>
</evidence>
<evidence type="ECO:0000256" key="3">
    <source>
        <dbReference type="SAM" id="MobiDB-lite"/>
    </source>
</evidence>
<evidence type="ECO:0000269" key="4">
    <source>
    </source>
</evidence>
<evidence type="ECO:0000269" key="5">
    <source>
    </source>
</evidence>
<evidence type="ECO:0000269" key="6">
    <source>
    </source>
</evidence>
<evidence type="ECO:0000305" key="7"/>
<reference key="1">
    <citation type="journal article" date="1996" name="EMBO J.">
        <title>The hybrid histidine kinase DokA is part of the osmotic response system of Dictyostelium.</title>
        <authorList>
            <person name="Schuster S.C."/>
            <person name="Noegel A.A."/>
            <person name="Oehme F."/>
            <person name="Gerisch G."/>
            <person name="Simon M.I."/>
        </authorList>
    </citation>
    <scope>NUCLEOTIDE SEQUENCE [GENOMIC DNA]</scope>
    <scope>CHARACTERIZATION</scope>
    <scope>DEVELOPMENTAL STAGE</scope>
    <source>
        <strain>AX2</strain>
    </source>
</reference>
<reference key="2">
    <citation type="journal article" date="2002" name="Nature">
        <title>Sequence and analysis of chromosome 2 of Dictyostelium discoideum.</title>
        <authorList>
            <person name="Gloeckner G."/>
            <person name="Eichinger L."/>
            <person name="Szafranski K."/>
            <person name="Pachebat J.A."/>
            <person name="Bankier A.T."/>
            <person name="Dear P.H."/>
            <person name="Lehmann R."/>
            <person name="Baumgart C."/>
            <person name="Parra G."/>
            <person name="Abril J.F."/>
            <person name="Guigo R."/>
            <person name="Kumpf K."/>
            <person name="Tunggal B."/>
            <person name="Cox E.C."/>
            <person name="Quail M.A."/>
            <person name="Platzer M."/>
            <person name="Rosenthal A."/>
            <person name="Noegel A.A."/>
        </authorList>
    </citation>
    <scope>NUCLEOTIDE SEQUENCE [LARGE SCALE GENOMIC DNA]</scope>
    <source>
        <strain>AX4</strain>
    </source>
</reference>
<reference key="3">
    <citation type="journal article" date="2005" name="Nature">
        <title>The genome of the social amoeba Dictyostelium discoideum.</title>
        <authorList>
            <person name="Eichinger L."/>
            <person name="Pachebat J.A."/>
            <person name="Gloeckner G."/>
            <person name="Rajandream M.A."/>
            <person name="Sucgang R."/>
            <person name="Berriman M."/>
            <person name="Song J."/>
            <person name="Olsen R."/>
            <person name="Szafranski K."/>
            <person name="Xu Q."/>
            <person name="Tunggal B."/>
            <person name="Kummerfeld S."/>
            <person name="Madera M."/>
            <person name="Konfortov B.A."/>
            <person name="Rivero F."/>
            <person name="Bankier A.T."/>
            <person name="Lehmann R."/>
            <person name="Hamlin N."/>
            <person name="Davies R."/>
            <person name="Gaudet P."/>
            <person name="Fey P."/>
            <person name="Pilcher K."/>
            <person name="Chen G."/>
            <person name="Saunders D."/>
            <person name="Sodergren E.J."/>
            <person name="Davis P."/>
            <person name="Kerhornou A."/>
            <person name="Nie X."/>
            <person name="Hall N."/>
            <person name="Anjard C."/>
            <person name="Hemphill L."/>
            <person name="Bason N."/>
            <person name="Farbrother P."/>
            <person name="Desany B."/>
            <person name="Just E."/>
            <person name="Morio T."/>
            <person name="Rost R."/>
            <person name="Churcher C.M."/>
            <person name="Cooper J."/>
            <person name="Haydock S."/>
            <person name="van Driessche N."/>
            <person name="Cronin A."/>
            <person name="Goodhead I."/>
            <person name="Muzny D.M."/>
            <person name="Mourier T."/>
            <person name="Pain A."/>
            <person name="Lu M."/>
            <person name="Harper D."/>
            <person name="Lindsay R."/>
            <person name="Hauser H."/>
            <person name="James K.D."/>
            <person name="Quiles M."/>
            <person name="Madan Babu M."/>
            <person name="Saito T."/>
            <person name="Buchrieser C."/>
            <person name="Wardroper A."/>
            <person name="Felder M."/>
            <person name="Thangavelu M."/>
            <person name="Johnson D."/>
            <person name="Knights A."/>
            <person name="Loulseged H."/>
            <person name="Mungall K.L."/>
            <person name="Oliver K."/>
            <person name="Price C."/>
            <person name="Quail M.A."/>
            <person name="Urushihara H."/>
            <person name="Hernandez J."/>
            <person name="Rabbinowitsch E."/>
            <person name="Steffen D."/>
            <person name="Sanders M."/>
            <person name="Ma J."/>
            <person name="Kohara Y."/>
            <person name="Sharp S."/>
            <person name="Simmonds M.N."/>
            <person name="Spiegler S."/>
            <person name="Tivey A."/>
            <person name="Sugano S."/>
            <person name="White B."/>
            <person name="Walker D."/>
            <person name="Woodward J.R."/>
            <person name="Winckler T."/>
            <person name="Tanaka Y."/>
            <person name="Shaulsky G."/>
            <person name="Schleicher M."/>
            <person name="Weinstock G.M."/>
            <person name="Rosenthal A."/>
            <person name="Cox E.C."/>
            <person name="Chisholm R.L."/>
            <person name="Gibbs R.A."/>
            <person name="Loomis W.F."/>
            <person name="Platzer M."/>
            <person name="Kay R.R."/>
            <person name="Williams J.G."/>
            <person name="Dear P.H."/>
            <person name="Noegel A.A."/>
            <person name="Barrell B.G."/>
            <person name="Kuspa A."/>
        </authorList>
    </citation>
    <scope>NUCLEOTIDE SEQUENCE [LARGE SCALE GENOMIC DNA]</scope>
    <source>
        <strain>AX4</strain>
    </source>
</reference>
<reference key="4">
    <citation type="journal article" date="2000" name="EMBO J.">
        <title>Osmotic stress response in Dictyostelium is mediated by cAMP.</title>
        <authorList>
            <person name="Ott A."/>
            <person name="Oehme F."/>
            <person name="Keller H."/>
            <person name="Schuster S.C."/>
        </authorList>
    </citation>
    <scope>FUNCTION</scope>
    <scope>DISRUPTION PHENOTYPE</scope>
</reference>
<reference key="5">
    <citation type="journal article" date="2001" name="BMC Biochem.">
        <title>Osmotic stress-dependent serine phosphorylation of the histidine kinase homologue DokA.</title>
        <authorList>
            <person name="Oehme F."/>
            <person name="Schuster S.C."/>
        </authorList>
    </citation>
    <scope>FUNCTION</scope>
    <scope>PHOSPHORYLATION</scope>
    <scope>MUTAGENESIS OF GLY-1206 AND GLY-1208</scope>
</reference>
<keyword id="KW-0597">Phosphoprotein</keyword>
<keyword id="KW-1185">Reference proteome</keyword>
<keyword id="KW-0807">Transducer</keyword>
<name>DOKA_DICDI</name>
<feature type="chain" id="PRO_0000339235" description="Hybrid signal transduction protein dokA">
    <location>
        <begin position="1"/>
        <end position="1671"/>
    </location>
</feature>
<feature type="domain" description="Histidine kinase" evidence="1">
    <location>
        <begin position="1050"/>
        <end position="1276"/>
    </location>
</feature>
<feature type="domain" description="Response regulatory" evidence="2">
    <location>
        <begin position="1519"/>
        <end position="1633"/>
    </location>
</feature>
<feature type="region of interest" description="Disordered" evidence="3">
    <location>
        <begin position="1"/>
        <end position="27"/>
    </location>
</feature>
<feature type="region of interest" description="Disordered" evidence="3">
    <location>
        <begin position="42"/>
        <end position="89"/>
    </location>
</feature>
<feature type="region of interest" description="Disordered" evidence="3">
    <location>
        <begin position="126"/>
        <end position="241"/>
    </location>
</feature>
<feature type="region of interest" description="Disordered" evidence="3">
    <location>
        <begin position="365"/>
        <end position="451"/>
    </location>
</feature>
<feature type="region of interest" description="Disordered" evidence="3">
    <location>
        <begin position="579"/>
        <end position="603"/>
    </location>
</feature>
<feature type="region of interest" description="Disordered" evidence="3">
    <location>
        <begin position="629"/>
        <end position="651"/>
    </location>
</feature>
<feature type="compositionally biased region" description="Basic and acidic residues" evidence="3">
    <location>
        <begin position="1"/>
        <end position="10"/>
    </location>
</feature>
<feature type="compositionally biased region" description="Polar residues" evidence="3">
    <location>
        <begin position="11"/>
        <end position="27"/>
    </location>
</feature>
<feature type="compositionally biased region" description="Low complexity" evidence="3">
    <location>
        <begin position="45"/>
        <end position="83"/>
    </location>
</feature>
<feature type="compositionally biased region" description="Low complexity" evidence="3">
    <location>
        <begin position="126"/>
        <end position="167"/>
    </location>
</feature>
<feature type="compositionally biased region" description="Acidic residues" evidence="3">
    <location>
        <begin position="168"/>
        <end position="179"/>
    </location>
</feature>
<feature type="compositionally biased region" description="Low complexity" evidence="3">
    <location>
        <begin position="367"/>
        <end position="449"/>
    </location>
</feature>
<feature type="compositionally biased region" description="Polar residues" evidence="3">
    <location>
        <begin position="591"/>
        <end position="600"/>
    </location>
</feature>
<feature type="mutagenesis site" description="Phosphorylation is not affected." evidence="5">
    <original>G</original>
    <variation>A</variation>
    <location>
        <position position="1206"/>
    </location>
</feature>
<feature type="mutagenesis site" description="Phosphorylation is not affected." evidence="5">
    <original>G</original>
    <variation>A</variation>
    <location>
        <position position="1208"/>
    </location>
</feature>
<gene>
    <name type="primary">dokA</name>
    <name type="ORF">DDB_G0274101</name>
</gene>
<sequence length="1671" mass="186136">MSSPHIELHSQRTLSPQPSSNNFELTGNKSCALSASLNGSIDDLNNNNNNNNNNNNNNNNNNNNNNNNNNNNNNNNNNNNNNNDGDKNDKKLLIITNAPTPPLTPPQPTKTQQTLLELNQKFQEQQQQQQQQQQLQKQNKQQQSQKQQEEPPSSQQEEPPLSQQQQEQEQEQEQEQEQEEQSKQKIEGKGGGGEEEECEGGGGGEGEGEEQFKEGDEEEHEGIEIDPNLPTTGYTGKRRSSLQINEASPKLIQTPSVDRTLCILDSLPCPIFQIGIIENTENGNITLTGFANERLTTLLSCSSNLLVDSLKSIPSPHYNTVPSLESCNSIPINNLAPGLLPNTDPTKILDPYISLYNKKQLKERYSNNNNNTNTNNNNNNNNNNNNNNNNNNNNNNNDTTTTTTTTTTTTTTTTTTTTTTTTNESDNNNNNNNNNNNNNNNNNNNNNNNEEIKQNTKEGEEILHESTNSTGTGNSISRPNSILQCILDSFHEQKTITEKVLLSNFLIRQQYKSRATIKPFPDGCICIFEYIENINLNYQQPPTSLNDRINSTNKLTNEMELLSLSPDSNHQHVQKLHNHNHNHHNHNHNNTTQRASSTDSPFIHSVSANSLSSMSSNSSVTSACASLSSNSSSNSNNNSNNASSSNCSSNANSNNTNSSSSNCCCCCNNNNNNNTSSTSSTISSASSTKSKSYLHQQHKNSKVYSTLLNSFENLSFLLKSTPIIIWRADHNGEMVFFKKSDEIPIDEKKVVGNNFQDFLQWVPQTYRTNFQEMFQNSLKCGKIFEFLFWFQTPQNYVQLFKIAGYPIFHIDGKDCIASKRYLIGWLGVTYNYLINDGAEISIKGSANLDSMYEKFKIIYEMPNIERTKLTNNGISSGGDITNANNNGGSSESSNKILEKKKHLISEAEKECFLKCKETYNILFKLSLLGVMFSTFKGIILDANDMLLQTIGYTRGDLENGKIDWMLLTPPEHFEISARALQELKAKRWCQPIEKAYIHKSGKRVPVLITSAMIDGSTEQCITFVFDLSRYRQAEMAAIEATRLKTQFITNISHELRTPCHGIVGMSQLLLDSQLTNTQRDNIDSIKRSTDSLISLINDILDFSKLEYGKVTLENESFELLPMIEEVLDSQATAANRKGIDLIFVMGRDYPVPPVIFGDRNSLKKVLLNLVGNAVKFTETGFVLLEISTDYESGDQISLRFTVKDSGIGIPENKIEQIFVPFGQIDGSFSRKYGGSGLGLSFCKELVALMGGYIRVESGDQEGGKGTTFWFAIKVSISSPSYLPNSVPAANQFFYPEYRPSHYNNVIGNGDSPKNVLIIESNQMVIMSIQSILLSMKCECISASKAITALDLLESSKSTENQIDIIVCSDKSTFVQQILDYVTTEKVILYGVDPNSKYNENSKVYSYLVTPITHSKLISSILLSKNLKSKNSFLTTTNNTNNTNNTNNIENKSSIDSPLSITSTSSSIITPILTSNNLDLNNNNNNNNNSILVSNNGGVDGGNNVPSTLTTIQQSQPKKYILVAEDNDINIKVVVRQLEKLGYTAIVGINGLKALEIIGSFPICLILLDCQMPQMDGFTCSTILRQIEPTGQRIPIIAMTANDSKDRCFEVGMDDYLSKPVRVDRLQKTLSDWIKTDENGNPTNSYNFYPLSYSLVYNNFIDTQLKKEKNDD</sequence>